<proteinExistence type="evidence at protein level"/>
<feature type="chain" id="PRO_0000093556" description="Long neurotoxin 1">
    <location>
        <begin position="1"/>
        <end position="73"/>
    </location>
</feature>
<feature type="disulfide bond" evidence="1">
    <location>
        <begin position="3"/>
        <end position="21"/>
    </location>
</feature>
<feature type="disulfide bond" evidence="1">
    <location>
        <begin position="14"/>
        <end position="42"/>
    </location>
</feature>
<feature type="disulfide bond" evidence="1">
    <location>
        <begin position="27"/>
        <end position="31"/>
    </location>
</feature>
<feature type="disulfide bond" evidence="1">
    <location>
        <begin position="46"/>
        <end position="57"/>
    </location>
</feature>
<feature type="disulfide bond" evidence="1">
    <location>
        <begin position="58"/>
        <end position="63"/>
    </location>
</feature>
<reference key="1">
    <citation type="journal article" date="1973" name="Biochim. Biophys. Acta">
        <title>Snake venom toxins the amino acid sequences of two toxins from Ophiophagus hannah (King cobra) venom.</title>
        <authorList>
            <person name="Joubert F.J."/>
        </authorList>
    </citation>
    <scope>PROTEIN SEQUENCE</scope>
    <scope>TOXIC DOSE</scope>
    <scope>SUBCELLULAR LOCATION</scope>
    <source>
        <tissue>Venom</tissue>
    </source>
</reference>
<reference key="2">
    <citation type="journal article" date="2013" name="Proc. Natl. Acad. Sci. U.S.A.">
        <title>The king cobra genome reveals dynamic gene evolution and adaptation in the snake venom system.</title>
        <authorList>
            <person name="Vonk F.J."/>
            <person name="Casewell N.R."/>
            <person name="Henkel C.V."/>
            <person name="Heimberg A.M."/>
            <person name="Jansen H.J."/>
            <person name="McCleary R.J."/>
            <person name="Kerkkamp H.M."/>
            <person name="Vos R.A."/>
            <person name="Guerreiro I."/>
            <person name="Calvete J.J."/>
            <person name="Wuster W."/>
            <person name="Woods A.E."/>
            <person name="Logan J.M."/>
            <person name="Harrison R.A."/>
            <person name="Castoe T.A."/>
            <person name="de Koning A.P."/>
            <person name="Pollock D.D."/>
            <person name="Yandell M."/>
            <person name="Calderon D."/>
            <person name="Renjifo C."/>
            <person name="Currier R.B."/>
            <person name="Salgado D."/>
            <person name="Pla D."/>
            <person name="Sanz L."/>
            <person name="Hyder A.S."/>
            <person name="Ribeiro J.M."/>
            <person name="Arntzen J.W."/>
            <person name="van den Thillart G.E."/>
            <person name="Boetzer M."/>
            <person name="Pirovano W."/>
            <person name="Dirks R.P."/>
            <person name="Spaink H.P."/>
            <person name="Duboule D."/>
            <person name="McGlinn E."/>
            <person name="Kini R.M."/>
            <person name="Richardson M.K."/>
        </authorList>
    </citation>
    <scope>IDENTIFICATION BY MASS SPECTROMETRY</scope>
    <source>
        <tissue>Venom</tissue>
    </source>
</reference>
<dbReference type="PIR" id="A01658">
    <property type="entry name" value="N2OH1"/>
</dbReference>
<dbReference type="SMR" id="P01387"/>
<dbReference type="TopDownProteomics" id="P01387"/>
<dbReference type="GO" id="GO:0005576">
    <property type="term" value="C:extracellular region"/>
    <property type="evidence" value="ECO:0007669"/>
    <property type="project" value="UniProtKB-SubCell"/>
</dbReference>
<dbReference type="GO" id="GO:0030550">
    <property type="term" value="F:acetylcholine receptor inhibitor activity"/>
    <property type="evidence" value="ECO:0007669"/>
    <property type="project" value="UniProtKB-KW"/>
</dbReference>
<dbReference type="GO" id="GO:0099106">
    <property type="term" value="F:ion channel regulator activity"/>
    <property type="evidence" value="ECO:0007669"/>
    <property type="project" value="UniProtKB-KW"/>
</dbReference>
<dbReference type="GO" id="GO:0090729">
    <property type="term" value="F:toxin activity"/>
    <property type="evidence" value="ECO:0007669"/>
    <property type="project" value="UniProtKB-KW"/>
</dbReference>
<dbReference type="CDD" id="cd00206">
    <property type="entry name" value="TFP_snake_toxin"/>
    <property type="match status" value="1"/>
</dbReference>
<dbReference type="Gene3D" id="2.10.60.10">
    <property type="entry name" value="CD59"/>
    <property type="match status" value="1"/>
</dbReference>
<dbReference type="InterPro" id="IPR003571">
    <property type="entry name" value="Snake_3FTx"/>
</dbReference>
<dbReference type="InterPro" id="IPR045860">
    <property type="entry name" value="Snake_toxin-like_sf"/>
</dbReference>
<dbReference type="InterPro" id="IPR018354">
    <property type="entry name" value="Snake_toxin_con_site"/>
</dbReference>
<dbReference type="InterPro" id="IPR054131">
    <property type="entry name" value="Toxin_cobra-type"/>
</dbReference>
<dbReference type="Pfam" id="PF21947">
    <property type="entry name" value="Toxin_cobra-type"/>
    <property type="match status" value="1"/>
</dbReference>
<dbReference type="SUPFAM" id="SSF57302">
    <property type="entry name" value="Snake toxin-like"/>
    <property type="match status" value="1"/>
</dbReference>
<dbReference type="PROSITE" id="PS00272">
    <property type="entry name" value="SNAKE_TOXIN"/>
    <property type="match status" value="1"/>
</dbReference>
<name>3L21_OPHHA</name>
<sequence>TKCYVTPDVKSETCPAGQDICYTETWCDAWCTSRGKRVDLGCAATCPIVKPGVEIKCCSTDNCNPFPTWRKRP</sequence>
<accession>P01387</accession>
<keyword id="KW-0008">Acetylcholine receptor inhibiting toxin</keyword>
<keyword id="KW-0903">Direct protein sequencing</keyword>
<keyword id="KW-1015">Disulfide bond</keyword>
<keyword id="KW-0872">Ion channel impairing toxin</keyword>
<keyword id="KW-0528">Neurotoxin</keyword>
<keyword id="KW-0629">Postsynaptic neurotoxin</keyword>
<keyword id="KW-0964">Secreted</keyword>
<keyword id="KW-0800">Toxin</keyword>
<organism>
    <name type="scientific">Ophiophagus hannah</name>
    <name type="common">King cobra</name>
    <name type="synonym">Naja hannah</name>
    <dbReference type="NCBI Taxonomy" id="8665"/>
    <lineage>
        <taxon>Eukaryota</taxon>
        <taxon>Metazoa</taxon>
        <taxon>Chordata</taxon>
        <taxon>Craniata</taxon>
        <taxon>Vertebrata</taxon>
        <taxon>Euteleostomi</taxon>
        <taxon>Lepidosauria</taxon>
        <taxon>Squamata</taxon>
        <taxon>Bifurcata</taxon>
        <taxon>Unidentata</taxon>
        <taxon>Episquamata</taxon>
        <taxon>Toxicofera</taxon>
        <taxon>Serpentes</taxon>
        <taxon>Colubroidea</taxon>
        <taxon>Elapidae</taxon>
        <taxon>Elapinae</taxon>
        <taxon>Ophiophagus</taxon>
    </lineage>
</organism>
<evidence type="ECO:0000250" key="1"/>
<evidence type="ECO:0000250" key="2">
    <source>
        <dbReference type="UniProtKB" id="P60615"/>
    </source>
</evidence>
<evidence type="ECO:0000269" key="3">
    <source>
    </source>
</evidence>
<evidence type="ECO:0000305" key="4"/>
<comment type="function">
    <text evidence="2">Binds with high affinity to muscular (alpha-1/CHRNA1) and neuronal (alpha-7/CHRNA7) nicotinic acetylcholine receptor (nAChR) and inhibits acetylcholine from binding to the receptor, thereby impairing neuromuscular and neuronal transmission.</text>
</comment>
<comment type="subcellular location">
    <subcellularLocation>
        <location evidence="3">Secreted</location>
    </subcellularLocation>
</comment>
<comment type="tissue specificity">
    <text evidence="4">Expressed by the venom gland.</text>
</comment>
<comment type="toxic dose">
    <text evidence="3">LD(50) is 0.3 mg/kg by subcutaneous injection.</text>
</comment>
<comment type="similarity">
    <text evidence="4">Belongs to the three-finger toxin family. Long-chain subfamily. Type II alpha-neurotoxin sub-subfamily.</text>
</comment>
<protein>
    <recommendedName>
        <fullName>Long neurotoxin 1</fullName>
    </recommendedName>
    <alternativeName>
        <fullName>Neurotoxin A</fullName>
    </alternativeName>
</protein>